<evidence type="ECO:0000305" key="1"/>
<dbReference type="EMBL" id="X62578">
    <property type="protein sequence ID" value="CAA44461.1"/>
    <property type="molecule type" value="Genomic_DNA"/>
</dbReference>
<dbReference type="SMR" id="P28255"/>
<dbReference type="GO" id="GO:0009507">
    <property type="term" value="C:chloroplast"/>
    <property type="evidence" value="ECO:0007669"/>
    <property type="project" value="UniProtKB-SubCell"/>
</dbReference>
<dbReference type="GO" id="GO:0016020">
    <property type="term" value="C:membrane"/>
    <property type="evidence" value="ECO:0007669"/>
    <property type="project" value="InterPro"/>
</dbReference>
<dbReference type="GO" id="GO:0010020">
    <property type="term" value="P:chloroplast fission"/>
    <property type="evidence" value="ECO:0007669"/>
    <property type="project" value="TreeGrafter"/>
</dbReference>
<dbReference type="GO" id="GO:0090143">
    <property type="term" value="P:nucleoid organization"/>
    <property type="evidence" value="ECO:0007669"/>
    <property type="project" value="TreeGrafter"/>
</dbReference>
<dbReference type="InterPro" id="IPR003425">
    <property type="entry name" value="CCB3/YggT"/>
</dbReference>
<dbReference type="PANTHER" id="PTHR33219:SF14">
    <property type="entry name" value="PROTEIN COFACTOR ASSEMBLY OF COMPLEX C SUBUNIT B CCB3, CHLOROPLASTIC-RELATED"/>
    <property type="match status" value="1"/>
</dbReference>
<dbReference type="PANTHER" id="PTHR33219">
    <property type="entry name" value="YLMG HOMOLOG PROTEIN 2, CHLOROPLASTIC"/>
    <property type="match status" value="1"/>
</dbReference>
<dbReference type="Pfam" id="PF02325">
    <property type="entry name" value="YGGT"/>
    <property type="match status" value="1"/>
</dbReference>
<protein>
    <recommendedName>
        <fullName>Uncharacterized protein ycf19</fullName>
    </recommendedName>
</protein>
<reference key="1">
    <citation type="journal article" date="1992" name="Plant Mol. Biol.">
        <title>An equivalent to bacterial ompR genes is encoded on the plastid genome of red algae.</title>
        <authorList>
            <person name="Kessler U."/>
            <person name="Maid U."/>
            <person name="Zetsche K."/>
        </authorList>
    </citation>
    <scope>NUCLEOTIDE SEQUENCE [GENOMIC DNA]</scope>
    <source>
        <strain>14-1-1 / Isolate 107.79/Goettingen</strain>
    </source>
</reference>
<organism>
    <name type="scientific">Galdieria sulphuraria</name>
    <name type="common">Red alga</name>
    <dbReference type="NCBI Taxonomy" id="130081"/>
    <lineage>
        <taxon>Eukaryota</taxon>
        <taxon>Rhodophyta</taxon>
        <taxon>Bangiophyceae</taxon>
        <taxon>Galdieriales</taxon>
        <taxon>Galdieriaceae</taxon>
        <taxon>Galdieria</taxon>
    </lineage>
</organism>
<comment type="subcellular location">
    <subcellularLocation>
        <location>Plastid</location>
        <location>Chloroplast</location>
    </subcellularLocation>
</comment>
<comment type="similarity">
    <text evidence="1">Belongs to the ycf19 family.</text>
</comment>
<accession>P28255</accession>
<proteinExistence type="inferred from homology"/>
<name>YCF19_GALSU</name>
<sequence>MLIFILFVILKIILGVITEFCRIYLFALSIRVFLAWIVTINWYTQPYIVLKKLTDPYLNLFRGTLPLILGMDFSSMLGFLFLECVIKLLESIYIEIIY</sequence>
<geneLocation type="chloroplast"/>
<gene>
    <name type="primary">ycf19</name>
</gene>
<feature type="chain" id="PRO_0000217320" description="Uncharacterized protein ycf19">
    <location>
        <begin position="1"/>
        <end position="98"/>
    </location>
</feature>
<keyword id="KW-0150">Chloroplast</keyword>
<keyword id="KW-0934">Plastid</keyword>